<protein>
    <recommendedName>
        <fullName evidence="1">Translational regulator CsrA</fullName>
    </recommendedName>
    <alternativeName>
        <fullName evidence="1">Carbon storage regulator</fullName>
    </alternativeName>
</protein>
<proteinExistence type="inferred from homology"/>
<reference key="1">
    <citation type="journal article" date="2009" name="PLoS Genet.">
        <title>Organised genome dynamics in the Escherichia coli species results in highly diverse adaptive paths.</title>
        <authorList>
            <person name="Touchon M."/>
            <person name="Hoede C."/>
            <person name="Tenaillon O."/>
            <person name="Barbe V."/>
            <person name="Baeriswyl S."/>
            <person name="Bidet P."/>
            <person name="Bingen E."/>
            <person name="Bonacorsi S."/>
            <person name="Bouchier C."/>
            <person name="Bouvet O."/>
            <person name="Calteau A."/>
            <person name="Chiapello H."/>
            <person name="Clermont O."/>
            <person name="Cruveiller S."/>
            <person name="Danchin A."/>
            <person name="Diard M."/>
            <person name="Dossat C."/>
            <person name="Karoui M.E."/>
            <person name="Frapy E."/>
            <person name="Garry L."/>
            <person name="Ghigo J.M."/>
            <person name="Gilles A.M."/>
            <person name="Johnson J."/>
            <person name="Le Bouguenec C."/>
            <person name="Lescat M."/>
            <person name="Mangenot S."/>
            <person name="Martinez-Jehanne V."/>
            <person name="Matic I."/>
            <person name="Nassif X."/>
            <person name="Oztas S."/>
            <person name="Petit M.A."/>
            <person name="Pichon C."/>
            <person name="Rouy Z."/>
            <person name="Ruf C.S."/>
            <person name="Schneider D."/>
            <person name="Tourret J."/>
            <person name="Vacherie B."/>
            <person name="Vallenet D."/>
            <person name="Medigue C."/>
            <person name="Rocha E.P.C."/>
            <person name="Denamur E."/>
        </authorList>
    </citation>
    <scope>NUCLEOTIDE SEQUENCE [LARGE SCALE GENOMIC DNA]</scope>
    <source>
        <strain>S88 / ExPEC</strain>
    </source>
</reference>
<organism>
    <name type="scientific">Escherichia coli O45:K1 (strain S88 / ExPEC)</name>
    <dbReference type="NCBI Taxonomy" id="585035"/>
    <lineage>
        <taxon>Bacteria</taxon>
        <taxon>Pseudomonadati</taxon>
        <taxon>Pseudomonadota</taxon>
        <taxon>Gammaproteobacteria</taxon>
        <taxon>Enterobacterales</taxon>
        <taxon>Enterobacteriaceae</taxon>
        <taxon>Escherichia</taxon>
    </lineage>
</organism>
<sequence length="61" mass="6856">MLILTRRVGETLMIGDEVTVTVLGVKGNQVRIGVNAPKEVSVHREEIYQRIQAEKSQQSSY</sequence>
<gene>
    <name evidence="1" type="primary">csrA</name>
    <name type="ordered locus">ECS88_2959</name>
</gene>
<evidence type="ECO:0000255" key="1">
    <source>
        <dbReference type="HAMAP-Rule" id="MF_00167"/>
    </source>
</evidence>
<dbReference type="EMBL" id="CU928161">
    <property type="protein sequence ID" value="CAR04205.1"/>
    <property type="molecule type" value="Genomic_DNA"/>
</dbReference>
<dbReference type="RefSeq" id="WP_000906486.1">
    <property type="nucleotide sequence ID" value="NC_011742.1"/>
</dbReference>
<dbReference type="SMR" id="B7MKG5"/>
<dbReference type="GeneID" id="98389839"/>
<dbReference type="KEGG" id="ecz:ECS88_2959"/>
<dbReference type="HOGENOM" id="CLU_164837_2_1_6"/>
<dbReference type="Proteomes" id="UP000000747">
    <property type="component" value="Chromosome"/>
</dbReference>
<dbReference type="GO" id="GO:0005829">
    <property type="term" value="C:cytosol"/>
    <property type="evidence" value="ECO:0007669"/>
    <property type="project" value="TreeGrafter"/>
</dbReference>
<dbReference type="GO" id="GO:0048027">
    <property type="term" value="F:mRNA 5'-UTR binding"/>
    <property type="evidence" value="ECO:0007669"/>
    <property type="project" value="UniProtKB-UniRule"/>
</dbReference>
<dbReference type="GO" id="GO:0006402">
    <property type="term" value="P:mRNA catabolic process"/>
    <property type="evidence" value="ECO:0007669"/>
    <property type="project" value="InterPro"/>
</dbReference>
<dbReference type="GO" id="GO:0045947">
    <property type="term" value="P:negative regulation of translational initiation"/>
    <property type="evidence" value="ECO:0007669"/>
    <property type="project" value="UniProtKB-UniRule"/>
</dbReference>
<dbReference type="GO" id="GO:0045948">
    <property type="term" value="P:positive regulation of translational initiation"/>
    <property type="evidence" value="ECO:0007669"/>
    <property type="project" value="UniProtKB-UniRule"/>
</dbReference>
<dbReference type="GO" id="GO:0006109">
    <property type="term" value="P:regulation of carbohydrate metabolic process"/>
    <property type="evidence" value="ECO:0007669"/>
    <property type="project" value="UniProtKB-UniRule"/>
</dbReference>
<dbReference type="FunFam" id="2.60.40.4380:FF:000001">
    <property type="entry name" value="Translational regulator CsrA"/>
    <property type="match status" value="1"/>
</dbReference>
<dbReference type="Gene3D" id="2.60.40.4380">
    <property type="entry name" value="Translational regulator CsrA"/>
    <property type="match status" value="1"/>
</dbReference>
<dbReference type="HAMAP" id="MF_00167">
    <property type="entry name" value="CsrA"/>
    <property type="match status" value="1"/>
</dbReference>
<dbReference type="InterPro" id="IPR003751">
    <property type="entry name" value="CsrA"/>
</dbReference>
<dbReference type="InterPro" id="IPR036107">
    <property type="entry name" value="CsrA_sf"/>
</dbReference>
<dbReference type="NCBIfam" id="TIGR00202">
    <property type="entry name" value="csrA"/>
    <property type="match status" value="1"/>
</dbReference>
<dbReference type="NCBIfam" id="NF002469">
    <property type="entry name" value="PRK01712.1"/>
    <property type="match status" value="1"/>
</dbReference>
<dbReference type="PANTHER" id="PTHR34984">
    <property type="entry name" value="CARBON STORAGE REGULATOR"/>
    <property type="match status" value="1"/>
</dbReference>
<dbReference type="PANTHER" id="PTHR34984:SF1">
    <property type="entry name" value="CARBON STORAGE REGULATOR"/>
    <property type="match status" value="1"/>
</dbReference>
<dbReference type="Pfam" id="PF02599">
    <property type="entry name" value="CsrA"/>
    <property type="match status" value="1"/>
</dbReference>
<dbReference type="SUPFAM" id="SSF117130">
    <property type="entry name" value="CsrA-like"/>
    <property type="match status" value="1"/>
</dbReference>
<feature type="chain" id="PRO_1000118234" description="Translational regulator CsrA">
    <location>
        <begin position="1"/>
        <end position="61"/>
    </location>
</feature>
<comment type="function">
    <text evidence="1">A key translational regulator that binds mRNA to regulate translation initiation and/or mRNA stability. Mediates global changes in gene expression, shifting from rapid growth to stress survival by linking envelope stress, the stringent response and the catabolite repression systems. Usually binds in the 5'-UTR; binding at or near the Shine-Dalgarno sequence prevents ribosome-binding, repressing translation, binding elsewhere in the 5'-UTR can activate translation and/or stabilize the mRNA. Its function is antagonized by small RNA(s).</text>
</comment>
<comment type="subunit">
    <text evidence="1">Homodimer; the beta-strands of each monomer intercalate to form a hydrophobic core, while the alpha-helices form wings that extend away from the core.</text>
</comment>
<comment type="subcellular location">
    <subcellularLocation>
        <location evidence="1">Cytoplasm</location>
    </subcellularLocation>
</comment>
<comment type="similarity">
    <text evidence="1">Belongs to the CsrA/RsmA family.</text>
</comment>
<name>CSRA_ECO45</name>
<keyword id="KW-0010">Activator</keyword>
<keyword id="KW-0963">Cytoplasm</keyword>
<keyword id="KW-1185">Reference proteome</keyword>
<keyword id="KW-0678">Repressor</keyword>
<keyword id="KW-0694">RNA-binding</keyword>
<keyword id="KW-0810">Translation regulation</keyword>
<accession>B7MKG5</accession>